<comment type="function">
    <text evidence="5">Hydrolyzes 3-hydroxyisobutyryl-CoA (HIBYL-CoA), a saline catabolite. Has high activity toward isobutyryl-CoA. Could be an isobutyryl-CoA dehydrogenase that functions in valine catabolism. Also hydrolyzes 3-hydroxypropanoyl-CoA.</text>
</comment>
<comment type="catalytic activity">
    <reaction evidence="5">
        <text>3-hydroxy-2-methylpropanoyl-CoA + H2O = 3-hydroxy-2-methylpropanoate + CoA + H(+)</text>
        <dbReference type="Rhea" id="RHEA:20888"/>
        <dbReference type="ChEBI" id="CHEBI:11805"/>
        <dbReference type="ChEBI" id="CHEBI:15377"/>
        <dbReference type="ChEBI" id="CHEBI:15378"/>
        <dbReference type="ChEBI" id="CHEBI:57287"/>
        <dbReference type="ChEBI" id="CHEBI:57340"/>
        <dbReference type="EC" id="3.1.2.4"/>
    </reaction>
</comment>
<comment type="pathway">
    <text>Amino-acid degradation; L-valine degradation.</text>
</comment>
<comment type="subcellular location">
    <subcellularLocation>
        <location evidence="1">Mitochondrion</location>
    </subcellularLocation>
</comment>
<comment type="alternative products">
    <event type="alternative splicing"/>
    <isoform>
        <id>Q6NVY1-1</id>
        <name>1</name>
        <sequence type="displayed"/>
    </isoform>
    <isoform>
        <id>Q6NVY1-2</id>
        <name>2</name>
        <sequence type="described" ref="VSP_024780"/>
    </isoform>
</comment>
<comment type="tissue specificity">
    <text evidence="5">Highly expressed in liver and kidney, also detected in heart, muscle and brain (at protein level). Not detected in lung.</text>
</comment>
<comment type="disease" evidence="4">
    <disease id="DI-01740">
        <name>3-hydroxyisobutryl-CoA hydrolase deficiency</name>
        <acronym>HIBCHD</acronym>
        <description>An autosomal recessive inborn error of valine metabolism. It causes severely delayed psychomotor development, neurodegeneration, increased lactic acid, and brain lesions in the basal ganglia.</description>
        <dbReference type="MIM" id="250620"/>
    </disease>
    <text>The disease is caused by variants affecting the gene represented in this entry.</text>
</comment>
<comment type="similarity">
    <text evidence="8">Belongs to the enoyl-CoA hydratase/isomerase family.</text>
</comment>
<comment type="sequence caution" evidence="8">
    <conflict type="erroneous initiation">
        <sequence resource="EMBL-CDS" id="AAC52114"/>
    </conflict>
</comment>
<comment type="sequence caution" evidence="8">
    <conflict type="erroneous initiation">
        <sequence resource="EMBL-CDS" id="AAH05190"/>
    </conflict>
</comment>
<comment type="sequence caution" evidence="8">
    <conflict type="erroneous initiation">
        <sequence resource="EMBL-CDS" id="AAY24178"/>
    </conflict>
</comment>
<comment type="sequence caution" evidence="8">
    <conflict type="erroneous initiation">
        <sequence resource="EMBL-CDS" id="BAD96699"/>
    </conflict>
</comment>
<comment type="sequence caution" evidence="8">
    <conflict type="erroneous initiation">
        <sequence resource="EMBL-CDS" id="BAD96743"/>
    </conflict>
</comment>
<feature type="transit peptide" description="Mitochondrion" evidence="1">
    <location>
        <begin position="1"/>
        <end position="32"/>
    </location>
</feature>
<feature type="chain" id="PRO_0000284929" description="3-hydroxyisobutyryl-CoA hydrolase, mitochondrial">
    <location>
        <begin position="33"/>
        <end position="386"/>
    </location>
</feature>
<feature type="binding site">
    <location>
        <position position="121"/>
    </location>
    <ligand>
        <name>substrate</name>
    </ligand>
</feature>
<feature type="binding site">
    <location>
        <position position="146"/>
    </location>
    <ligand>
        <name>substrate</name>
    </ligand>
</feature>
<feature type="binding site">
    <location>
        <position position="169"/>
    </location>
    <ligand>
        <name>substrate</name>
    </ligand>
</feature>
<feature type="binding site">
    <location>
        <position position="177"/>
    </location>
    <ligand>
        <name>substrate</name>
    </ligand>
</feature>
<feature type="modified residue" description="N6-acetyllysine; alternate" evidence="2">
    <location>
        <position position="55"/>
    </location>
</feature>
<feature type="modified residue" description="N6-succinyllysine; alternate" evidence="2">
    <location>
        <position position="55"/>
    </location>
</feature>
<feature type="modified residue" description="N6-acetyllysine; alternate" evidence="9">
    <location>
        <position position="92"/>
    </location>
</feature>
<feature type="modified residue" description="N6-succinyllysine; alternate" evidence="2">
    <location>
        <position position="92"/>
    </location>
</feature>
<feature type="modified residue" description="N6-acetyllysine; alternate" evidence="2">
    <location>
        <position position="221"/>
    </location>
</feature>
<feature type="modified residue" description="N6-succinyllysine; alternate" evidence="2">
    <location>
        <position position="221"/>
    </location>
</feature>
<feature type="modified residue" description="Phosphoserine" evidence="10">
    <location>
        <position position="234"/>
    </location>
</feature>
<feature type="modified residue" description="N6-succinyllysine" evidence="2">
    <location>
        <position position="257"/>
    </location>
</feature>
<feature type="modified residue" description="N6-acetyllysine; alternate" evidence="2">
    <location>
        <position position="297"/>
    </location>
</feature>
<feature type="modified residue" description="N6-succinyllysine; alternate" evidence="2">
    <location>
        <position position="297"/>
    </location>
</feature>
<feature type="modified residue" description="N6-succinyllysine" evidence="2">
    <location>
        <position position="301"/>
    </location>
</feature>
<feature type="modified residue" description="N6-acetyllysine; alternate" evidence="2">
    <location>
        <position position="353"/>
    </location>
</feature>
<feature type="modified residue" description="N6-succinyllysine; alternate" evidence="2">
    <location>
        <position position="353"/>
    </location>
</feature>
<feature type="modified residue" description="Phosphoserine" evidence="10">
    <location>
        <position position="356"/>
    </location>
</feature>
<feature type="modified residue" description="N6-acetyllysine" evidence="2">
    <location>
        <position position="360"/>
    </location>
</feature>
<feature type="modified residue" description="N6-acetyllysine" evidence="2">
    <location>
        <position position="365"/>
    </location>
</feature>
<feature type="modified residue" description="N6-succinyllysine" evidence="2">
    <location>
        <position position="377"/>
    </location>
</feature>
<feature type="splice variant" id="VSP_024780" description="In isoform 2." evidence="8">
    <location>
        <begin position="338"/>
        <end position="385"/>
    </location>
</feature>
<feature type="sequence variant" id="VAR_031869" description="In dbSNP:rs1058180." evidence="3 6 7">
    <original>T</original>
    <variation>A</variation>
    <location>
        <position position="46"/>
    </location>
</feature>
<feature type="sequence variant" id="VAR_031870" description="In HIBCHD; dbSNP:rs121918329." evidence="4">
    <original>Y</original>
    <variation>C</variation>
    <location>
        <position position="122"/>
    </location>
</feature>
<feature type="sequence conflict" description="In Ref. 5; AAH67822." evidence="8" ref="5">
    <original>E</original>
    <variation>G</variation>
    <location>
        <position position="41"/>
    </location>
</feature>
<feature type="sequence conflict" description="In Ref. 1; AAC52114." evidence="8" ref="1">
    <original>L</original>
    <variation>V</variation>
    <location>
        <position position="83"/>
    </location>
</feature>
<feature type="sequence conflict" description="In Ref. 2; BAD96699." evidence="8" ref="2">
    <original>Q</original>
    <variation>R</variation>
    <location>
        <position position="111"/>
    </location>
</feature>
<feature type="sequence conflict" description="In Ref. 1; AAC52114." evidence="8" ref="1">
    <original>LPRLQGKLGYFLALT</original>
    <variation>FATTPRKTWLLPCIN</variation>
    <location>
        <begin position="184"/>
        <end position="198"/>
    </location>
</feature>
<feature type="sequence conflict" description="In Ref. 2; BAD96699." evidence="8" ref="2">
    <original>E</original>
    <variation>K</variation>
    <location>
        <position position="369"/>
    </location>
</feature>
<feature type="strand" evidence="11">
    <location>
        <begin position="37"/>
        <end position="43"/>
    </location>
</feature>
<feature type="strand" evidence="11">
    <location>
        <begin position="46"/>
        <end position="51"/>
    </location>
</feature>
<feature type="helix" evidence="11">
    <location>
        <begin position="54"/>
        <end position="56"/>
    </location>
</feature>
<feature type="helix" evidence="11">
    <location>
        <begin position="62"/>
        <end position="77"/>
    </location>
</feature>
<feature type="strand" evidence="11">
    <location>
        <begin position="83"/>
        <end position="88"/>
    </location>
</feature>
<feature type="strand" evidence="11">
    <location>
        <begin position="91"/>
        <end position="95"/>
    </location>
</feature>
<feature type="helix" evidence="11">
    <location>
        <begin position="100"/>
        <end position="107"/>
    </location>
</feature>
<feature type="helix" evidence="11">
    <location>
        <begin position="114"/>
        <end position="129"/>
    </location>
</feature>
<feature type="strand" evidence="11">
    <location>
        <begin position="135"/>
        <end position="139"/>
    </location>
</feature>
<feature type="strand" evidence="11">
    <location>
        <begin position="141"/>
        <end position="144"/>
    </location>
</feature>
<feature type="helix" evidence="11">
    <location>
        <begin position="146"/>
        <end position="149"/>
    </location>
</feature>
<feature type="turn" evidence="11">
    <location>
        <begin position="150"/>
        <end position="153"/>
    </location>
</feature>
<feature type="strand" evidence="11">
    <location>
        <begin position="154"/>
        <end position="159"/>
    </location>
</feature>
<feature type="strand" evidence="11">
    <location>
        <begin position="164"/>
        <end position="166"/>
    </location>
</feature>
<feature type="helix" evidence="11">
    <location>
        <begin position="169"/>
        <end position="171"/>
    </location>
</feature>
<feature type="helix" evidence="11">
    <location>
        <begin position="180"/>
        <end position="186"/>
    </location>
</feature>
<feature type="helix" evidence="11">
    <location>
        <begin position="191"/>
        <end position="198"/>
    </location>
</feature>
<feature type="helix" evidence="11">
    <location>
        <begin position="205"/>
        <end position="209"/>
    </location>
</feature>
<feature type="strand" evidence="11">
    <location>
        <begin position="214"/>
        <end position="216"/>
    </location>
</feature>
<feature type="helix" evidence="11">
    <location>
        <begin position="219"/>
        <end position="221"/>
    </location>
</feature>
<feature type="helix" evidence="11">
    <location>
        <begin position="222"/>
        <end position="231"/>
    </location>
</feature>
<feature type="helix" evidence="11">
    <location>
        <begin position="237"/>
        <end position="250"/>
    </location>
</feature>
<feature type="turn" evidence="11">
    <location>
        <begin position="253"/>
        <end position="256"/>
    </location>
</feature>
<feature type="helix" evidence="11">
    <location>
        <begin position="262"/>
        <end position="264"/>
    </location>
</feature>
<feature type="helix" evidence="11">
    <location>
        <begin position="265"/>
        <end position="271"/>
    </location>
</feature>
<feature type="strand" evidence="11">
    <location>
        <begin position="274"/>
        <end position="276"/>
    </location>
</feature>
<feature type="helix" evidence="11">
    <location>
        <begin position="277"/>
        <end position="287"/>
    </location>
</feature>
<feature type="helix" evidence="11">
    <location>
        <begin position="290"/>
        <end position="299"/>
    </location>
</feature>
<feature type="helix" evidence="11">
    <location>
        <begin position="304"/>
        <end position="317"/>
    </location>
</feature>
<feature type="helix" evidence="11">
    <location>
        <begin position="322"/>
        <end position="337"/>
    </location>
</feature>
<feature type="helix" evidence="11">
    <location>
        <begin position="341"/>
        <end position="349"/>
    </location>
</feature>
<feature type="helix" evidence="11">
    <location>
        <begin position="364"/>
        <end position="366"/>
    </location>
</feature>
<feature type="helix" evidence="11">
    <location>
        <begin position="369"/>
        <end position="376"/>
    </location>
</feature>
<feature type="helix" evidence="11">
    <location>
        <begin position="380"/>
        <end position="382"/>
    </location>
</feature>
<sequence>MGQREMWRLMSRFNAFKRTNTILHHLRMSKHTDAAEEVLLEKKGCTGVITLNRPKFLNALTLNMIRQIYPQLKKWEQDPETFLIIIKGAGGKAFCAGGDIRVISEAEKAKQKIAPVFFREEYMLNNAVGSCQKPYVALIHGITMGGGVGLSVHGQFRVATEKCLFAMPETAIGLFPDVGGGYFLPRLQGKLGYFLALTGFRLKGRDVYRAGIATHFVDSEKLAMLEEDLLALKSPSKENIASVLENYHTESKIDRDKSFILEEHMDKINSCFSANTVEEIIENLQQDGSSFALEQLKVINKMSPTSLKITLRQLMEGSSKTLQEVLTMEYRLSQACMRGHDFHEGVRAVLIDKDQSPKWKPADLKEVTEEDLNNHFKSLGSSDLKF</sequence>
<gene>
    <name type="primary">HIBCH</name>
</gene>
<keyword id="KW-0002">3D-structure</keyword>
<keyword id="KW-0007">Acetylation</keyword>
<keyword id="KW-0025">Alternative splicing</keyword>
<keyword id="KW-0101">Branched-chain amino acid catabolism</keyword>
<keyword id="KW-0225">Disease variant</keyword>
<keyword id="KW-0378">Hydrolase</keyword>
<keyword id="KW-0496">Mitochondrion</keyword>
<keyword id="KW-0597">Phosphoprotein</keyword>
<keyword id="KW-1267">Proteomics identification</keyword>
<keyword id="KW-1185">Reference proteome</keyword>
<keyword id="KW-0809">Transit peptide</keyword>
<reference key="1">
    <citation type="journal article" date="1996" name="J. Biol. Chem.">
        <title>Primary structure and tissue-specific expression of human beta-hydroxyisobutyryl-coenzyme A hydrolase.</title>
        <authorList>
            <person name="Hawes J.W."/>
            <person name="Jaskiewicz J."/>
            <person name="Shimomura Y."/>
            <person name="Huang B."/>
            <person name="Bunting J."/>
            <person name="Harper E.T."/>
            <person name="Harris R.A."/>
        </authorList>
    </citation>
    <scope>NUCLEOTIDE SEQUENCE [MRNA]</scope>
    <scope>FUNCTION</scope>
    <scope>CATALYTIC ACTIVITY</scope>
    <scope>TISSUE SPECIFICITY</scope>
    <source>
        <tissue>Brain</tissue>
    </source>
</reference>
<reference key="2">
    <citation type="submission" date="2005-04" db="EMBL/GenBank/DDBJ databases">
        <authorList>
            <person name="Suzuki Y."/>
            <person name="Sugano S."/>
            <person name="Totoki Y."/>
            <person name="Toyoda A."/>
            <person name="Takeda T."/>
            <person name="Sakaki Y."/>
            <person name="Tanaka A."/>
            <person name="Yokoyama S."/>
        </authorList>
    </citation>
    <scope>NUCLEOTIDE SEQUENCE [LARGE SCALE MRNA]</scope>
    <scope>VARIANT ALA-46</scope>
    <source>
        <tissue>Small intestine</tissue>
    </source>
</reference>
<reference key="3">
    <citation type="journal article" date="2005" name="Nature">
        <title>Generation and annotation of the DNA sequences of human chromosomes 2 and 4.</title>
        <authorList>
            <person name="Hillier L.W."/>
            <person name="Graves T.A."/>
            <person name="Fulton R.S."/>
            <person name="Fulton L.A."/>
            <person name="Pepin K.H."/>
            <person name="Minx P."/>
            <person name="Wagner-McPherson C."/>
            <person name="Layman D."/>
            <person name="Wylie K."/>
            <person name="Sekhon M."/>
            <person name="Becker M.C."/>
            <person name="Fewell G.A."/>
            <person name="Delehaunty K.D."/>
            <person name="Miner T.L."/>
            <person name="Nash W.E."/>
            <person name="Kremitzki C."/>
            <person name="Oddy L."/>
            <person name="Du H."/>
            <person name="Sun H."/>
            <person name="Bradshaw-Cordum H."/>
            <person name="Ali J."/>
            <person name="Carter J."/>
            <person name="Cordes M."/>
            <person name="Harris A."/>
            <person name="Isak A."/>
            <person name="van Brunt A."/>
            <person name="Nguyen C."/>
            <person name="Du F."/>
            <person name="Courtney L."/>
            <person name="Kalicki J."/>
            <person name="Ozersky P."/>
            <person name="Abbott S."/>
            <person name="Armstrong J."/>
            <person name="Belter E.A."/>
            <person name="Caruso L."/>
            <person name="Cedroni M."/>
            <person name="Cotton M."/>
            <person name="Davidson T."/>
            <person name="Desai A."/>
            <person name="Elliott G."/>
            <person name="Erb T."/>
            <person name="Fronick C."/>
            <person name="Gaige T."/>
            <person name="Haakenson W."/>
            <person name="Haglund K."/>
            <person name="Holmes A."/>
            <person name="Harkins R."/>
            <person name="Kim K."/>
            <person name="Kruchowski S.S."/>
            <person name="Strong C.M."/>
            <person name="Grewal N."/>
            <person name="Goyea E."/>
            <person name="Hou S."/>
            <person name="Levy A."/>
            <person name="Martinka S."/>
            <person name="Mead K."/>
            <person name="McLellan M.D."/>
            <person name="Meyer R."/>
            <person name="Randall-Maher J."/>
            <person name="Tomlinson C."/>
            <person name="Dauphin-Kohlberg S."/>
            <person name="Kozlowicz-Reilly A."/>
            <person name="Shah N."/>
            <person name="Swearengen-Shahid S."/>
            <person name="Snider J."/>
            <person name="Strong J.T."/>
            <person name="Thompson J."/>
            <person name="Yoakum M."/>
            <person name="Leonard S."/>
            <person name="Pearman C."/>
            <person name="Trani L."/>
            <person name="Radionenko M."/>
            <person name="Waligorski J.E."/>
            <person name="Wang C."/>
            <person name="Rock S.M."/>
            <person name="Tin-Wollam A.-M."/>
            <person name="Maupin R."/>
            <person name="Latreille P."/>
            <person name="Wendl M.C."/>
            <person name="Yang S.-P."/>
            <person name="Pohl C."/>
            <person name="Wallis J.W."/>
            <person name="Spieth J."/>
            <person name="Bieri T.A."/>
            <person name="Berkowicz N."/>
            <person name="Nelson J.O."/>
            <person name="Osborne J."/>
            <person name="Ding L."/>
            <person name="Meyer R."/>
            <person name="Sabo A."/>
            <person name="Shotland Y."/>
            <person name="Sinha P."/>
            <person name="Wohldmann P.E."/>
            <person name="Cook L.L."/>
            <person name="Hickenbotham M.T."/>
            <person name="Eldred J."/>
            <person name="Williams D."/>
            <person name="Jones T.A."/>
            <person name="She X."/>
            <person name="Ciccarelli F.D."/>
            <person name="Izaurralde E."/>
            <person name="Taylor J."/>
            <person name="Schmutz J."/>
            <person name="Myers R.M."/>
            <person name="Cox D.R."/>
            <person name="Huang X."/>
            <person name="McPherson J.D."/>
            <person name="Mardis E.R."/>
            <person name="Clifton S.W."/>
            <person name="Warren W.C."/>
            <person name="Chinwalla A.T."/>
            <person name="Eddy S.R."/>
            <person name="Marra M.A."/>
            <person name="Ovcharenko I."/>
            <person name="Furey T.S."/>
            <person name="Miller W."/>
            <person name="Eichler E.E."/>
            <person name="Bork P."/>
            <person name="Suyama M."/>
            <person name="Torrents D."/>
            <person name="Waterston R.H."/>
            <person name="Wilson R.K."/>
        </authorList>
    </citation>
    <scope>NUCLEOTIDE SEQUENCE [LARGE SCALE GENOMIC DNA]</scope>
</reference>
<reference key="4">
    <citation type="submission" date="2005-09" db="EMBL/GenBank/DDBJ databases">
        <authorList>
            <person name="Mural R.J."/>
            <person name="Istrail S."/>
            <person name="Sutton G.G."/>
            <person name="Florea L."/>
            <person name="Halpern A.L."/>
            <person name="Mobarry C.M."/>
            <person name="Lippert R."/>
            <person name="Walenz B."/>
            <person name="Shatkay H."/>
            <person name="Dew I."/>
            <person name="Miller J.R."/>
            <person name="Flanigan M.J."/>
            <person name="Edwards N.J."/>
            <person name="Bolanos R."/>
            <person name="Fasulo D."/>
            <person name="Halldorsson B.V."/>
            <person name="Hannenhalli S."/>
            <person name="Turner R."/>
            <person name="Yooseph S."/>
            <person name="Lu F."/>
            <person name="Nusskern D.R."/>
            <person name="Shue B.C."/>
            <person name="Zheng X.H."/>
            <person name="Zhong F."/>
            <person name="Delcher A.L."/>
            <person name="Huson D.H."/>
            <person name="Kravitz S.A."/>
            <person name="Mouchard L."/>
            <person name="Reinert K."/>
            <person name="Remington K.A."/>
            <person name="Clark A.G."/>
            <person name="Waterman M.S."/>
            <person name="Eichler E.E."/>
            <person name="Adams M.D."/>
            <person name="Hunkapiller M.W."/>
            <person name="Myers E.W."/>
            <person name="Venter J.C."/>
        </authorList>
    </citation>
    <scope>NUCLEOTIDE SEQUENCE [LARGE SCALE GENOMIC DNA]</scope>
    <scope>VARIANT ALA-46</scope>
</reference>
<reference key="5">
    <citation type="journal article" date="2004" name="Genome Res.">
        <title>The status, quality, and expansion of the NIH full-length cDNA project: the Mammalian Gene Collection (MGC).</title>
        <authorList>
            <consortium name="The MGC Project Team"/>
        </authorList>
    </citation>
    <scope>NUCLEOTIDE SEQUENCE [LARGE SCALE MRNA]</scope>
    <scope>VARIANT ALA-46</scope>
    <source>
        <tissue>Testis</tissue>
    </source>
</reference>
<reference key="6">
    <citation type="journal article" date="2009" name="Science">
        <title>Lysine acetylation targets protein complexes and co-regulates major cellular functions.</title>
        <authorList>
            <person name="Choudhary C."/>
            <person name="Kumar C."/>
            <person name="Gnad F."/>
            <person name="Nielsen M.L."/>
            <person name="Rehman M."/>
            <person name="Walther T.C."/>
            <person name="Olsen J.V."/>
            <person name="Mann M."/>
        </authorList>
    </citation>
    <scope>ACETYLATION [LARGE SCALE ANALYSIS] AT LYS-92</scope>
    <scope>IDENTIFICATION BY MASS SPECTROMETRY [LARGE SCALE ANALYSIS]</scope>
</reference>
<reference key="7">
    <citation type="journal article" date="2011" name="BMC Syst. Biol.">
        <title>Initial characterization of the human central proteome.</title>
        <authorList>
            <person name="Burkard T.R."/>
            <person name="Planyavsky M."/>
            <person name="Kaupe I."/>
            <person name="Breitwieser F.P."/>
            <person name="Buerckstuemmer T."/>
            <person name="Bennett K.L."/>
            <person name="Superti-Furga G."/>
            <person name="Colinge J."/>
        </authorList>
    </citation>
    <scope>IDENTIFICATION BY MASS SPECTROMETRY [LARGE SCALE ANALYSIS]</scope>
</reference>
<reference key="8">
    <citation type="journal article" date="2013" name="J. Proteome Res.">
        <title>Toward a comprehensive characterization of a human cancer cell phosphoproteome.</title>
        <authorList>
            <person name="Zhou H."/>
            <person name="Di Palma S."/>
            <person name="Preisinger C."/>
            <person name="Peng M."/>
            <person name="Polat A.N."/>
            <person name="Heck A.J."/>
            <person name="Mohammed S."/>
        </authorList>
    </citation>
    <scope>PHOSPHORYLATION [LARGE SCALE ANALYSIS] AT SER-234 AND SER-356</scope>
    <scope>IDENTIFICATION BY MASS SPECTROMETRY [LARGE SCALE ANALYSIS]</scope>
    <source>
        <tissue>Cervix carcinoma</tissue>
        <tissue>Erythroleukemia</tissue>
    </source>
</reference>
<reference key="9">
    <citation type="journal article" date="2014" name="J. Proteomics">
        <title>An enzyme assisted RP-RPLC approach for in-depth analysis of human liver phosphoproteome.</title>
        <authorList>
            <person name="Bian Y."/>
            <person name="Song C."/>
            <person name="Cheng K."/>
            <person name="Dong M."/>
            <person name="Wang F."/>
            <person name="Huang J."/>
            <person name="Sun D."/>
            <person name="Wang L."/>
            <person name="Ye M."/>
            <person name="Zou H."/>
        </authorList>
    </citation>
    <scope>IDENTIFICATION BY MASS SPECTROMETRY [LARGE SCALE ANALYSIS]</scope>
    <source>
        <tissue>Liver</tissue>
    </source>
</reference>
<reference key="10">
    <citation type="journal article" date="2015" name="Proteomics">
        <title>N-terminome analysis of the human mitochondrial proteome.</title>
        <authorList>
            <person name="Vaca Jacome A.S."/>
            <person name="Rabilloud T."/>
            <person name="Schaeffer-Reiss C."/>
            <person name="Rompais M."/>
            <person name="Ayoub D."/>
            <person name="Lane L."/>
            <person name="Bairoch A."/>
            <person name="Van Dorsselaer A."/>
            <person name="Carapito C."/>
        </authorList>
    </citation>
    <scope>IDENTIFICATION BY MASS SPECTROMETRY [LARGE SCALE ANALYSIS]</scope>
</reference>
<reference key="11">
    <citation type="submission" date="2008-01" db="PDB data bank">
        <title>Crystal structure of human beta-hydroxyisobutyryl-COA hydrolase in complex with quercetin.</title>
        <authorList>
            <consortium name="Structural genomics consortium (SGC)"/>
        </authorList>
    </citation>
    <scope>X-RAY CRYSTALLOGRAPHY (1.5 ANGSTROMS) OF 32-386 IN COMPLEX WITH 3-HYDROXY-2-METHYLPROPANOIC ACID AND QUERCETIN</scope>
</reference>
<reference key="12">
    <citation type="journal article" date="2007" name="Am. J. Hum. Genet.">
        <title>Mutations in the gene encoding 3-hydroxyisobutyryl-CoA hydrolase results in progressive infantile neurodegeneration.</title>
        <authorList>
            <person name="Loupatty F.J."/>
            <person name="Clayton P.T."/>
            <person name="Ruiter J.P.N."/>
            <person name="Ofman R."/>
            <person name="Ijlst L."/>
            <person name="Brown G.K."/>
            <person name="Thorburn D.R."/>
            <person name="Harris R.A."/>
            <person name="Duran M."/>
            <person name="Desousa C."/>
            <person name="Krywawych S."/>
            <person name="Heales S.J.R."/>
            <person name="Wanders R.J.A."/>
        </authorList>
    </citation>
    <scope>VARIANT HIBCHD CYS-122</scope>
</reference>
<accession>Q6NVY1</accession>
<accession>D3DPI4</accession>
<accession>Q53GA8</accession>
<accession>Q53GF2</accession>
<accession>Q53RF7</accession>
<accession>Q53TC6</accession>
<accession>Q92931</accession>
<accession>Q9BS94</accession>
<protein>
    <recommendedName>
        <fullName>3-hydroxyisobutyryl-CoA hydrolase, mitochondrial</fullName>
        <ecNumber>3.1.2.4</ecNumber>
    </recommendedName>
    <alternativeName>
        <fullName>3-hydroxyisobutyryl-coenzyme A hydrolase</fullName>
        <shortName>HIB-CoA hydrolase</shortName>
        <shortName>HIBYL-CoA-H</shortName>
    </alternativeName>
</protein>
<name>HIBCH_HUMAN</name>
<evidence type="ECO:0000250" key="1"/>
<evidence type="ECO:0000250" key="2">
    <source>
        <dbReference type="UniProtKB" id="Q8QZS1"/>
    </source>
</evidence>
<evidence type="ECO:0000269" key="3">
    <source>
    </source>
</evidence>
<evidence type="ECO:0000269" key="4">
    <source>
    </source>
</evidence>
<evidence type="ECO:0000269" key="5">
    <source>
    </source>
</evidence>
<evidence type="ECO:0000269" key="6">
    <source ref="2"/>
</evidence>
<evidence type="ECO:0000269" key="7">
    <source ref="4"/>
</evidence>
<evidence type="ECO:0000305" key="8"/>
<evidence type="ECO:0007744" key="9">
    <source>
    </source>
</evidence>
<evidence type="ECO:0007744" key="10">
    <source>
    </source>
</evidence>
<evidence type="ECO:0007829" key="11">
    <source>
        <dbReference type="PDB" id="3BPT"/>
    </source>
</evidence>
<organism>
    <name type="scientific">Homo sapiens</name>
    <name type="common">Human</name>
    <dbReference type="NCBI Taxonomy" id="9606"/>
    <lineage>
        <taxon>Eukaryota</taxon>
        <taxon>Metazoa</taxon>
        <taxon>Chordata</taxon>
        <taxon>Craniata</taxon>
        <taxon>Vertebrata</taxon>
        <taxon>Euteleostomi</taxon>
        <taxon>Mammalia</taxon>
        <taxon>Eutheria</taxon>
        <taxon>Euarchontoglires</taxon>
        <taxon>Primates</taxon>
        <taxon>Haplorrhini</taxon>
        <taxon>Catarrhini</taxon>
        <taxon>Hominidae</taxon>
        <taxon>Homo</taxon>
    </lineage>
</organism>
<proteinExistence type="evidence at protein level"/>
<dbReference type="EC" id="3.1.2.4"/>
<dbReference type="EMBL" id="U66669">
    <property type="protein sequence ID" value="AAC52114.1"/>
    <property type="status" value="ALT_INIT"/>
    <property type="molecule type" value="mRNA"/>
</dbReference>
<dbReference type="EMBL" id="AK222979">
    <property type="protein sequence ID" value="BAD96699.1"/>
    <property type="status" value="ALT_INIT"/>
    <property type="molecule type" value="mRNA"/>
</dbReference>
<dbReference type="EMBL" id="AK223023">
    <property type="protein sequence ID" value="BAD96743.1"/>
    <property type="status" value="ALT_INIT"/>
    <property type="molecule type" value="mRNA"/>
</dbReference>
<dbReference type="EMBL" id="AC092178">
    <property type="protein sequence ID" value="AAY24178.1"/>
    <property type="status" value="ALT_INIT"/>
    <property type="molecule type" value="Genomic_DNA"/>
</dbReference>
<dbReference type="EMBL" id="AC010679">
    <property type="protein sequence ID" value="AAX93234.1"/>
    <property type="molecule type" value="Genomic_DNA"/>
</dbReference>
<dbReference type="EMBL" id="CH471058">
    <property type="protein sequence ID" value="EAX10873.1"/>
    <property type="molecule type" value="Genomic_DNA"/>
</dbReference>
<dbReference type="EMBL" id="CH471058">
    <property type="protein sequence ID" value="EAX10875.1"/>
    <property type="molecule type" value="Genomic_DNA"/>
</dbReference>
<dbReference type="EMBL" id="BC005190">
    <property type="protein sequence ID" value="AAH05190.2"/>
    <property type="status" value="ALT_INIT"/>
    <property type="molecule type" value="mRNA"/>
</dbReference>
<dbReference type="EMBL" id="BC067822">
    <property type="protein sequence ID" value="AAH67822.1"/>
    <property type="molecule type" value="mRNA"/>
</dbReference>
<dbReference type="CCDS" id="CCDS2304.1">
    <molecule id="Q6NVY1-1"/>
</dbReference>
<dbReference type="CCDS" id="CCDS46475.1">
    <molecule id="Q6NVY1-2"/>
</dbReference>
<dbReference type="RefSeq" id="NP_055177.2">
    <molecule id="Q6NVY1-1"/>
    <property type="nucleotide sequence ID" value="NM_014362.3"/>
</dbReference>
<dbReference type="RefSeq" id="NP_932164.1">
    <molecule id="Q6NVY1-2"/>
    <property type="nucleotide sequence ID" value="NM_198047.3"/>
</dbReference>
<dbReference type="RefSeq" id="XP_011509255.1">
    <molecule id="Q6NVY1-1"/>
    <property type="nucleotide sequence ID" value="XM_011510953.3"/>
</dbReference>
<dbReference type="RefSeq" id="XP_047299861.1">
    <molecule id="Q6NVY1-1"/>
    <property type="nucleotide sequence ID" value="XM_047443905.1"/>
</dbReference>
<dbReference type="PDB" id="3BPT">
    <property type="method" value="X-ray"/>
    <property type="resolution" value="1.50 A"/>
    <property type="chains" value="A=32-386"/>
</dbReference>
<dbReference type="PDBsum" id="3BPT"/>
<dbReference type="SMR" id="Q6NVY1"/>
<dbReference type="BioGRID" id="117658">
    <property type="interactions" value="85"/>
</dbReference>
<dbReference type="FunCoup" id="Q6NVY1">
    <property type="interactions" value="2031"/>
</dbReference>
<dbReference type="IntAct" id="Q6NVY1">
    <property type="interactions" value="29"/>
</dbReference>
<dbReference type="STRING" id="9606.ENSP00000352706"/>
<dbReference type="ChEMBL" id="CHEMBL3817723"/>
<dbReference type="DrugBank" id="DB04216">
    <property type="generic name" value="Quercetin"/>
</dbReference>
<dbReference type="GlyGen" id="Q6NVY1">
    <property type="glycosylation" value="1 site, 1 O-linked glycan (1 site)"/>
</dbReference>
<dbReference type="iPTMnet" id="Q6NVY1"/>
<dbReference type="MetOSite" id="Q6NVY1"/>
<dbReference type="PhosphoSitePlus" id="Q6NVY1"/>
<dbReference type="SwissPalm" id="Q6NVY1"/>
<dbReference type="BioMuta" id="HIBCH"/>
<dbReference type="DMDM" id="146324905"/>
<dbReference type="REPRODUCTION-2DPAGE" id="IPI00419802"/>
<dbReference type="jPOST" id="Q6NVY1"/>
<dbReference type="MassIVE" id="Q6NVY1"/>
<dbReference type="PaxDb" id="9606-ENSP00000352706"/>
<dbReference type="PeptideAtlas" id="Q6NVY1"/>
<dbReference type="ProteomicsDB" id="66734">
    <molecule id="Q6NVY1-1"/>
</dbReference>
<dbReference type="ProteomicsDB" id="66735">
    <molecule id="Q6NVY1-2"/>
</dbReference>
<dbReference type="Pumba" id="Q6NVY1"/>
<dbReference type="Antibodypedia" id="34034">
    <property type="antibodies" value="304 antibodies from 28 providers"/>
</dbReference>
<dbReference type="DNASU" id="26275"/>
<dbReference type="Ensembl" id="ENST00000359678.10">
    <molecule id="Q6NVY1-1"/>
    <property type="protein sequence ID" value="ENSP00000352706.5"/>
    <property type="gene ID" value="ENSG00000198130.16"/>
</dbReference>
<dbReference type="Ensembl" id="ENST00000392332.7">
    <molecule id="Q6NVY1-2"/>
    <property type="protein sequence ID" value="ENSP00000376144.3"/>
    <property type="gene ID" value="ENSG00000198130.16"/>
</dbReference>
<dbReference type="GeneID" id="26275"/>
<dbReference type="KEGG" id="hsa:26275"/>
<dbReference type="MANE-Select" id="ENST00000359678.10">
    <property type="protein sequence ID" value="ENSP00000352706.5"/>
    <property type="RefSeq nucleotide sequence ID" value="NM_014362.4"/>
    <property type="RefSeq protein sequence ID" value="NP_055177.2"/>
</dbReference>
<dbReference type="UCSC" id="uc002uru.3">
    <molecule id="Q6NVY1-1"/>
    <property type="organism name" value="human"/>
</dbReference>
<dbReference type="AGR" id="HGNC:4908"/>
<dbReference type="CTD" id="26275"/>
<dbReference type="DisGeNET" id="26275"/>
<dbReference type="GeneCards" id="HIBCH"/>
<dbReference type="HGNC" id="HGNC:4908">
    <property type="gene designation" value="HIBCH"/>
</dbReference>
<dbReference type="HPA" id="ENSG00000198130">
    <property type="expression patterns" value="Low tissue specificity"/>
</dbReference>
<dbReference type="MalaCards" id="HIBCH"/>
<dbReference type="MIM" id="250620">
    <property type="type" value="phenotype"/>
</dbReference>
<dbReference type="MIM" id="610690">
    <property type="type" value="gene"/>
</dbReference>
<dbReference type="neXtProt" id="NX_Q6NVY1"/>
<dbReference type="OpenTargets" id="ENSG00000198130"/>
<dbReference type="Orphanet" id="88639">
    <property type="disease" value="Neurodegeneration due to 3-hydroxyisobutyryl-CoA hydrolase deficiency"/>
</dbReference>
<dbReference type="PharmGKB" id="PA29281"/>
<dbReference type="VEuPathDB" id="HostDB:ENSG00000198130"/>
<dbReference type="eggNOG" id="KOG1684">
    <property type="taxonomic scope" value="Eukaryota"/>
</dbReference>
<dbReference type="GeneTree" id="ENSGT00890000139491"/>
<dbReference type="HOGENOM" id="CLU_009834_22_1_1"/>
<dbReference type="InParanoid" id="Q6NVY1"/>
<dbReference type="OMA" id="EVFTMEY"/>
<dbReference type="OrthoDB" id="1737613at2759"/>
<dbReference type="PAN-GO" id="Q6NVY1">
    <property type="GO annotations" value="3 GO annotations based on evolutionary models"/>
</dbReference>
<dbReference type="PhylomeDB" id="Q6NVY1"/>
<dbReference type="TreeFam" id="TF314329"/>
<dbReference type="BRENDA" id="3.1.2.4">
    <property type="organism ID" value="2681"/>
</dbReference>
<dbReference type="PathwayCommons" id="Q6NVY1"/>
<dbReference type="Reactome" id="R-HSA-70895">
    <property type="pathway name" value="Branched-chain amino acid catabolism"/>
</dbReference>
<dbReference type="Reactome" id="R-HSA-9916722">
    <property type="pathway name" value="3-hydroxyisobutyryl-CoA hydrolase deficiency"/>
</dbReference>
<dbReference type="SABIO-RK" id="Q6NVY1"/>
<dbReference type="SignaLink" id="Q6NVY1"/>
<dbReference type="UniPathway" id="UPA00362"/>
<dbReference type="BioGRID-ORCS" id="26275">
    <property type="hits" value="39 hits in 1161 CRISPR screens"/>
</dbReference>
<dbReference type="CD-CODE" id="91857CE7">
    <property type="entry name" value="Nucleolus"/>
</dbReference>
<dbReference type="CD-CODE" id="FB4E32DD">
    <property type="entry name" value="Presynaptic clusters and postsynaptic densities"/>
</dbReference>
<dbReference type="ChiTaRS" id="HIBCH">
    <property type="organism name" value="human"/>
</dbReference>
<dbReference type="EvolutionaryTrace" id="Q6NVY1"/>
<dbReference type="GenomeRNAi" id="26275"/>
<dbReference type="Pharos" id="Q6NVY1">
    <property type="development level" value="Tbio"/>
</dbReference>
<dbReference type="PRO" id="PR:Q6NVY1"/>
<dbReference type="Proteomes" id="UP000005640">
    <property type="component" value="Chromosome 2"/>
</dbReference>
<dbReference type="RNAct" id="Q6NVY1">
    <property type="molecule type" value="protein"/>
</dbReference>
<dbReference type="Bgee" id="ENSG00000198130">
    <property type="expression patterns" value="Expressed in nephron tubule and 213 other cell types or tissues"/>
</dbReference>
<dbReference type="ExpressionAtlas" id="Q6NVY1">
    <property type="expression patterns" value="baseline and differential"/>
</dbReference>
<dbReference type="GO" id="GO:0005759">
    <property type="term" value="C:mitochondrial matrix"/>
    <property type="evidence" value="ECO:0000304"/>
    <property type="project" value="Reactome"/>
</dbReference>
<dbReference type="GO" id="GO:0005739">
    <property type="term" value="C:mitochondrion"/>
    <property type="evidence" value="ECO:0000314"/>
    <property type="project" value="HPA"/>
</dbReference>
<dbReference type="GO" id="GO:0003860">
    <property type="term" value="F:3-hydroxyisobutyryl-CoA hydrolase activity"/>
    <property type="evidence" value="ECO:0000314"/>
    <property type="project" value="UniProtKB"/>
</dbReference>
<dbReference type="GO" id="GO:0009083">
    <property type="term" value="P:branched-chain amino acid catabolic process"/>
    <property type="evidence" value="ECO:0000304"/>
    <property type="project" value="Reactome"/>
</dbReference>
<dbReference type="GO" id="GO:0006574">
    <property type="term" value="P:valine catabolic process"/>
    <property type="evidence" value="ECO:0000318"/>
    <property type="project" value="GO_Central"/>
</dbReference>
<dbReference type="CDD" id="cd06558">
    <property type="entry name" value="crotonase-like"/>
    <property type="match status" value="1"/>
</dbReference>
<dbReference type="FunFam" id="3.90.226.10:FF:000026">
    <property type="entry name" value="3-hydroxyisobutyryl-CoA hydrolase, mitochondrial"/>
    <property type="match status" value="1"/>
</dbReference>
<dbReference type="Gene3D" id="3.90.226.10">
    <property type="entry name" value="2-enoyl-CoA Hydratase, Chain A, domain 1"/>
    <property type="match status" value="1"/>
</dbReference>
<dbReference type="InterPro" id="IPR029045">
    <property type="entry name" value="ClpP/crotonase-like_dom_sf"/>
</dbReference>
<dbReference type="InterPro" id="IPR045004">
    <property type="entry name" value="ECH_dom"/>
</dbReference>
<dbReference type="InterPro" id="IPR032259">
    <property type="entry name" value="HIBYL-CoA-H"/>
</dbReference>
<dbReference type="NCBIfam" id="NF004127">
    <property type="entry name" value="PRK05617.1"/>
    <property type="match status" value="1"/>
</dbReference>
<dbReference type="PANTHER" id="PTHR43176:SF15">
    <property type="entry name" value="3-HYDROXYISOBUTYRYL-COA HYDROLASE, MITOCHONDRIAL"/>
    <property type="match status" value="1"/>
</dbReference>
<dbReference type="PANTHER" id="PTHR43176">
    <property type="entry name" value="3-HYDROXYISOBUTYRYL-COA HYDROLASE-RELATED"/>
    <property type="match status" value="1"/>
</dbReference>
<dbReference type="Pfam" id="PF16113">
    <property type="entry name" value="ECH_2"/>
    <property type="match status" value="1"/>
</dbReference>
<dbReference type="SUPFAM" id="SSF52096">
    <property type="entry name" value="ClpP/crotonase"/>
    <property type="match status" value="1"/>
</dbReference>